<proteinExistence type="inferred from homology"/>
<reference key="1">
    <citation type="submission" date="2008-04" db="EMBL/GenBank/DDBJ databases">
        <title>Complete sequence of Yersinia pseudotuberculosis PB1/+.</title>
        <authorList>
            <person name="Copeland A."/>
            <person name="Lucas S."/>
            <person name="Lapidus A."/>
            <person name="Glavina del Rio T."/>
            <person name="Dalin E."/>
            <person name="Tice H."/>
            <person name="Bruce D."/>
            <person name="Goodwin L."/>
            <person name="Pitluck S."/>
            <person name="Munk A.C."/>
            <person name="Brettin T."/>
            <person name="Detter J.C."/>
            <person name="Han C."/>
            <person name="Tapia R."/>
            <person name="Schmutz J."/>
            <person name="Larimer F."/>
            <person name="Land M."/>
            <person name="Hauser L."/>
            <person name="Challacombe J.F."/>
            <person name="Green L."/>
            <person name="Lindler L.E."/>
            <person name="Nikolich M.P."/>
            <person name="Richardson P."/>
        </authorList>
    </citation>
    <scope>NUCLEOTIDE SEQUENCE [LARGE SCALE GENOMIC DNA]</scope>
    <source>
        <strain>PB1/+</strain>
    </source>
</reference>
<dbReference type="EMBL" id="CP001048">
    <property type="protein sequence ID" value="ACC89060.1"/>
    <property type="molecule type" value="Genomic_DNA"/>
</dbReference>
<dbReference type="RefSeq" id="WP_002211202.1">
    <property type="nucleotide sequence ID" value="NZ_CP009780.1"/>
</dbReference>
<dbReference type="SMR" id="B2K321"/>
<dbReference type="KEGG" id="ypb:YPTS_2097"/>
<dbReference type="PATRIC" id="fig|502801.10.peg.1487"/>
<dbReference type="GO" id="GO:0005829">
    <property type="term" value="C:cytosol"/>
    <property type="evidence" value="ECO:0007669"/>
    <property type="project" value="TreeGrafter"/>
</dbReference>
<dbReference type="GO" id="GO:0003677">
    <property type="term" value="F:DNA binding"/>
    <property type="evidence" value="ECO:0007669"/>
    <property type="project" value="UniProtKB-UniRule"/>
</dbReference>
<dbReference type="GO" id="GO:0006355">
    <property type="term" value="P:regulation of DNA-templated transcription"/>
    <property type="evidence" value="ECO:0007669"/>
    <property type="project" value="UniProtKB-UniRule"/>
</dbReference>
<dbReference type="FunFam" id="1.10.10.200:FF:000001">
    <property type="entry name" value="Probable transcriptional regulatory protein YebC"/>
    <property type="match status" value="1"/>
</dbReference>
<dbReference type="FunFam" id="3.30.70.980:FF:000002">
    <property type="entry name" value="Probable transcriptional regulatory protein YebC"/>
    <property type="match status" value="1"/>
</dbReference>
<dbReference type="Gene3D" id="1.10.10.200">
    <property type="match status" value="1"/>
</dbReference>
<dbReference type="Gene3D" id="3.30.70.980">
    <property type="match status" value="2"/>
</dbReference>
<dbReference type="HAMAP" id="MF_00693">
    <property type="entry name" value="Transcrip_reg_TACO1"/>
    <property type="match status" value="1"/>
</dbReference>
<dbReference type="InterPro" id="IPR017856">
    <property type="entry name" value="Integrase-like_N"/>
</dbReference>
<dbReference type="InterPro" id="IPR048300">
    <property type="entry name" value="TACO1_YebC-like_2nd/3rd_dom"/>
</dbReference>
<dbReference type="InterPro" id="IPR049083">
    <property type="entry name" value="TACO1_YebC_N"/>
</dbReference>
<dbReference type="InterPro" id="IPR002876">
    <property type="entry name" value="Transcrip_reg_TACO1-like"/>
</dbReference>
<dbReference type="InterPro" id="IPR026564">
    <property type="entry name" value="Transcrip_reg_TACO1-like_dom3"/>
</dbReference>
<dbReference type="InterPro" id="IPR029072">
    <property type="entry name" value="YebC-like"/>
</dbReference>
<dbReference type="NCBIfam" id="NF001030">
    <property type="entry name" value="PRK00110.1"/>
    <property type="match status" value="1"/>
</dbReference>
<dbReference type="NCBIfam" id="NF009044">
    <property type="entry name" value="PRK12378.1"/>
    <property type="match status" value="1"/>
</dbReference>
<dbReference type="NCBIfam" id="TIGR01033">
    <property type="entry name" value="YebC/PmpR family DNA-binding transcriptional regulator"/>
    <property type="match status" value="1"/>
</dbReference>
<dbReference type="PANTHER" id="PTHR12532:SF6">
    <property type="entry name" value="TRANSCRIPTIONAL REGULATORY PROTEIN YEBC-RELATED"/>
    <property type="match status" value="1"/>
</dbReference>
<dbReference type="PANTHER" id="PTHR12532">
    <property type="entry name" value="TRANSLATIONAL ACTIVATOR OF CYTOCHROME C OXIDASE 1"/>
    <property type="match status" value="1"/>
</dbReference>
<dbReference type="Pfam" id="PF20772">
    <property type="entry name" value="TACO1_YebC_N"/>
    <property type="match status" value="1"/>
</dbReference>
<dbReference type="Pfam" id="PF01709">
    <property type="entry name" value="Transcrip_reg"/>
    <property type="match status" value="1"/>
</dbReference>
<dbReference type="SUPFAM" id="SSF75625">
    <property type="entry name" value="YebC-like"/>
    <property type="match status" value="1"/>
</dbReference>
<name>Y2097_YERPB</name>
<evidence type="ECO:0000255" key="1">
    <source>
        <dbReference type="HAMAP-Rule" id="MF_00693"/>
    </source>
</evidence>
<accession>B2K321</accession>
<feature type="chain" id="PRO_1000132261" description="Probable transcriptional regulatory protein YPTS_2097">
    <location>
        <begin position="1"/>
        <end position="247"/>
    </location>
</feature>
<organism>
    <name type="scientific">Yersinia pseudotuberculosis serotype IB (strain PB1/+)</name>
    <dbReference type="NCBI Taxonomy" id="502801"/>
    <lineage>
        <taxon>Bacteria</taxon>
        <taxon>Pseudomonadati</taxon>
        <taxon>Pseudomonadota</taxon>
        <taxon>Gammaproteobacteria</taxon>
        <taxon>Enterobacterales</taxon>
        <taxon>Yersiniaceae</taxon>
        <taxon>Yersinia</taxon>
    </lineage>
</organism>
<sequence>MAGHSKWANTKHRKAAQDAKRGKIFTKIIRELVTAARLGGGDPGANPRLRAAIDKALSNNMTRDTLNRAIARGVGGDEDNNMETIIYEGYGPGGTAVMVECLSDNRNRTVSEVRHAFTKTGGNLGTDGSVSYLFTKKGVISYAPGLEEDTVMDAALEAGADDIVVYDDGAIDVFTAWESLGAVKDALDATGLVAEGAEVSLIPSTKAELDAETAPKLLRLIDMLEDSDDVQEVYHNGEISDEVAATL</sequence>
<comment type="subcellular location">
    <subcellularLocation>
        <location evidence="1">Cytoplasm</location>
    </subcellularLocation>
</comment>
<comment type="similarity">
    <text evidence="1">Belongs to the TACO1 family.</text>
</comment>
<gene>
    <name type="ordered locus">YPTS_2097</name>
</gene>
<keyword id="KW-0963">Cytoplasm</keyword>
<keyword id="KW-0238">DNA-binding</keyword>
<keyword id="KW-0804">Transcription</keyword>
<keyword id="KW-0805">Transcription regulation</keyword>
<protein>
    <recommendedName>
        <fullName evidence="1">Probable transcriptional regulatory protein YPTS_2097</fullName>
    </recommendedName>
</protein>